<sequence length="259" mass="28439">MMQKQNMIVVNQKEIAKNIYELVLQGTLVQQMNEPGQFVHIKVAEGIAPLLRRPISICNVDQEKNEFTMLYRAEGQGTKTLATRKQGEMVDVLGPLGHGFPVEEAEAGQTALLVGGGIGVPPLYELSQRLVAKGVRVIHILGFQTKDVVFYEEKFAELGDTYVATVDGTHGTKGFVTDVIDHYGIDFDILYSCGPLAMLRALEGRYKEKKAYISLEERMGCGIGACFACVCHLQEDPSGHSYKKVCSDGPVFPIGEVVL</sequence>
<protein>
    <recommendedName>
        <fullName evidence="1">Dihydroorotate dehydrogenase B (NAD(+)), electron transfer subunit</fullName>
    </recommendedName>
    <alternativeName>
        <fullName evidence="1">Dihydroorotate oxidase B, electron transfer subunit</fullName>
    </alternativeName>
</protein>
<proteinExistence type="inferred from homology"/>
<name>PYRK_BACC0</name>
<organism>
    <name type="scientific">Bacillus cereus (strain AH820)</name>
    <dbReference type="NCBI Taxonomy" id="405535"/>
    <lineage>
        <taxon>Bacteria</taxon>
        <taxon>Bacillati</taxon>
        <taxon>Bacillota</taxon>
        <taxon>Bacilli</taxon>
        <taxon>Bacillales</taxon>
        <taxon>Bacillaceae</taxon>
        <taxon>Bacillus</taxon>
        <taxon>Bacillus cereus group</taxon>
    </lineage>
</organism>
<dbReference type="EMBL" id="CP001283">
    <property type="protein sequence ID" value="ACK92235.1"/>
    <property type="molecule type" value="Genomic_DNA"/>
</dbReference>
<dbReference type="RefSeq" id="WP_000983358.1">
    <property type="nucleotide sequence ID" value="NC_011773.1"/>
</dbReference>
<dbReference type="SMR" id="B7JJX2"/>
<dbReference type="GeneID" id="75087022"/>
<dbReference type="KEGG" id="bcu:BCAH820_3899"/>
<dbReference type="HOGENOM" id="CLU_003827_1_2_9"/>
<dbReference type="UniPathway" id="UPA00070">
    <property type="reaction ID" value="UER00945"/>
</dbReference>
<dbReference type="Proteomes" id="UP000001363">
    <property type="component" value="Chromosome"/>
</dbReference>
<dbReference type="GO" id="GO:0051537">
    <property type="term" value="F:2 iron, 2 sulfur cluster binding"/>
    <property type="evidence" value="ECO:0007669"/>
    <property type="project" value="UniProtKB-KW"/>
</dbReference>
<dbReference type="GO" id="GO:0009055">
    <property type="term" value="F:electron transfer activity"/>
    <property type="evidence" value="ECO:0007669"/>
    <property type="project" value="UniProtKB-UniRule"/>
</dbReference>
<dbReference type="GO" id="GO:0050660">
    <property type="term" value="F:flavin adenine dinucleotide binding"/>
    <property type="evidence" value="ECO:0007669"/>
    <property type="project" value="InterPro"/>
</dbReference>
<dbReference type="GO" id="GO:0046872">
    <property type="term" value="F:metal ion binding"/>
    <property type="evidence" value="ECO:0007669"/>
    <property type="project" value="UniProtKB-KW"/>
</dbReference>
<dbReference type="GO" id="GO:0016491">
    <property type="term" value="F:oxidoreductase activity"/>
    <property type="evidence" value="ECO:0007669"/>
    <property type="project" value="InterPro"/>
</dbReference>
<dbReference type="GO" id="GO:0044205">
    <property type="term" value="P:'de novo' UMP biosynthetic process"/>
    <property type="evidence" value="ECO:0007669"/>
    <property type="project" value="UniProtKB-UniRule"/>
</dbReference>
<dbReference type="CDD" id="cd06218">
    <property type="entry name" value="DHOD_e_trans"/>
    <property type="match status" value="1"/>
</dbReference>
<dbReference type="FunFam" id="2.10.240.10:FF:000001">
    <property type="entry name" value="Dihydroorotate dehydrogenase B (NAD(+)), electron transfer subunit"/>
    <property type="match status" value="1"/>
</dbReference>
<dbReference type="FunFam" id="2.40.30.10:FF:000045">
    <property type="entry name" value="Dihydroorotate dehydrogenase B (NAD(+)), electron transfer subunit"/>
    <property type="match status" value="1"/>
</dbReference>
<dbReference type="FunFam" id="3.40.50.80:FF:000017">
    <property type="entry name" value="Dihydroorotate dehydrogenase B (NAD(+)), electron transfer subunit"/>
    <property type="match status" value="1"/>
</dbReference>
<dbReference type="Gene3D" id="2.10.240.10">
    <property type="entry name" value="Dihydroorotate dehydrogenase, electron transfer subunit"/>
    <property type="match status" value="1"/>
</dbReference>
<dbReference type="Gene3D" id="3.40.50.80">
    <property type="entry name" value="Nucleotide-binding domain of ferredoxin-NADP reductase (FNR) module"/>
    <property type="match status" value="1"/>
</dbReference>
<dbReference type="Gene3D" id="2.40.30.10">
    <property type="entry name" value="Translation factors"/>
    <property type="match status" value="1"/>
</dbReference>
<dbReference type="HAMAP" id="MF_01211">
    <property type="entry name" value="DHODB_Fe_S_bind"/>
    <property type="match status" value="1"/>
</dbReference>
<dbReference type="InterPro" id="IPR012165">
    <property type="entry name" value="Cyt_c3_hydrogenase_gsu"/>
</dbReference>
<dbReference type="InterPro" id="IPR037117">
    <property type="entry name" value="Dihydroorotate_DH_ele_sf"/>
</dbReference>
<dbReference type="InterPro" id="IPR019480">
    <property type="entry name" value="Dihydroorotate_DH_Fe-S-bd"/>
</dbReference>
<dbReference type="InterPro" id="IPR023455">
    <property type="entry name" value="Dihydroorotate_DHASE_ETsu"/>
</dbReference>
<dbReference type="InterPro" id="IPR017927">
    <property type="entry name" value="FAD-bd_FR_type"/>
</dbReference>
<dbReference type="InterPro" id="IPR039261">
    <property type="entry name" value="FNR_nucleotide-bd"/>
</dbReference>
<dbReference type="InterPro" id="IPR001433">
    <property type="entry name" value="OxRdtase_FAD/NAD-bd"/>
</dbReference>
<dbReference type="InterPro" id="IPR050353">
    <property type="entry name" value="PyrK_electron_transfer"/>
</dbReference>
<dbReference type="InterPro" id="IPR017938">
    <property type="entry name" value="Riboflavin_synthase-like_b-brl"/>
</dbReference>
<dbReference type="NCBIfam" id="NF000797">
    <property type="entry name" value="PRK00054.1-2"/>
    <property type="match status" value="1"/>
</dbReference>
<dbReference type="NCBIfam" id="NF000799">
    <property type="entry name" value="PRK00054.1-4"/>
    <property type="match status" value="1"/>
</dbReference>
<dbReference type="PANTHER" id="PTHR43513">
    <property type="entry name" value="DIHYDROOROTATE DEHYDROGENASE B (NAD(+)), ELECTRON TRANSFER SUBUNIT"/>
    <property type="match status" value="1"/>
</dbReference>
<dbReference type="PANTHER" id="PTHR43513:SF3">
    <property type="entry name" value="DIHYDROOROTATE DEHYDROGENASE B (NAD(+)), ELECTRON TRANSFER SUBUNIT-RELATED"/>
    <property type="match status" value="1"/>
</dbReference>
<dbReference type="Pfam" id="PF10418">
    <property type="entry name" value="DHODB_Fe-S_bind"/>
    <property type="match status" value="1"/>
</dbReference>
<dbReference type="Pfam" id="PF00175">
    <property type="entry name" value="NAD_binding_1"/>
    <property type="match status" value="1"/>
</dbReference>
<dbReference type="PIRSF" id="PIRSF006816">
    <property type="entry name" value="Cyc3_hyd_g"/>
    <property type="match status" value="1"/>
</dbReference>
<dbReference type="PRINTS" id="PR00409">
    <property type="entry name" value="PHDIOXRDTASE"/>
</dbReference>
<dbReference type="SUPFAM" id="SSF52343">
    <property type="entry name" value="Ferredoxin reductase-like, C-terminal NADP-linked domain"/>
    <property type="match status" value="1"/>
</dbReference>
<dbReference type="SUPFAM" id="SSF63380">
    <property type="entry name" value="Riboflavin synthase domain-like"/>
    <property type="match status" value="1"/>
</dbReference>
<dbReference type="PROSITE" id="PS51384">
    <property type="entry name" value="FAD_FR"/>
    <property type="match status" value="1"/>
</dbReference>
<reference key="1">
    <citation type="submission" date="2008-10" db="EMBL/GenBank/DDBJ databases">
        <title>Genome sequence of Bacillus cereus AH820.</title>
        <authorList>
            <person name="Dodson R.J."/>
            <person name="Durkin A.S."/>
            <person name="Rosovitz M.J."/>
            <person name="Rasko D.A."/>
            <person name="Hoffmaster A."/>
            <person name="Ravel J."/>
            <person name="Sutton G."/>
        </authorList>
    </citation>
    <scope>NUCLEOTIDE SEQUENCE [LARGE SCALE GENOMIC DNA]</scope>
    <source>
        <strain>AH820</strain>
    </source>
</reference>
<comment type="function">
    <text evidence="1">Responsible for channeling the electrons from the oxidation of dihydroorotate from the FMN redox center in the PyrD type B subunit to the ultimate electron acceptor NAD(+).</text>
</comment>
<comment type="cofactor">
    <cofactor evidence="1">
        <name>[2Fe-2S] cluster</name>
        <dbReference type="ChEBI" id="CHEBI:190135"/>
    </cofactor>
    <text evidence="1">Binds 1 [2Fe-2S] cluster per subunit.</text>
</comment>
<comment type="cofactor">
    <cofactor evidence="1">
        <name>FAD</name>
        <dbReference type="ChEBI" id="CHEBI:57692"/>
    </cofactor>
    <text evidence="1">Binds 1 FAD per subunit.</text>
</comment>
<comment type="pathway">
    <text evidence="1">Pyrimidine metabolism; UMP biosynthesis via de novo pathway; orotate from (S)-dihydroorotate (NAD(+) route): step 1/1.</text>
</comment>
<comment type="subunit">
    <text evidence="1">Heterotetramer of 2 PyrK and 2 PyrD type B subunits.</text>
</comment>
<comment type="similarity">
    <text evidence="1">Belongs to the PyrK family.</text>
</comment>
<feature type="chain" id="PRO_1000138906" description="Dihydroorotate dehydrogenase B (NAD(+)), electron transfer subunit">
    <location>
        <begin position="1"/>
        <end position="259"/>
    </location>
</feature>
<feature type="domain" description="FAD-binding FR-type" evidence="1">
    <location>
        <begin position="2"/>
        <end position="102"/>
    </location>
</feature>
<feature type="binding site" evidence="1">
    <location>
        <begin position="53"/>
        <end position="56"/>
    </location>
    <ligand>
        <name>FAD</name>
        <dbReference type="ChEBI" id="CHEBI:57692"/>
    </ligand>
</feature>
<feature type="binding site" evidence="1">
    <location>
        <begin position="70"/>
        <end position="72"/>
    </location>
    <ligand>
        <name>FAD</name>
        <dbReference type="ChEBI" id="CHEBI:57692"/>
    </ligand>
</feature>
<feature type="binding site" evidence="1">
    <location>
        <begin position="77"/>
        <end position="78"/>
    </location>
    <ligand>
        <name>FAD</name>
        <dbReference type="ChEBI" id="CHEBI:57692"/>
    </ligand>
</feature>
<feature type="binding site" evidence="1">
    <location>
        <position position="221"/>
    </location>
    <ligand>
        <name>[2Fe-2S] cluster</name>
        <dbReference type="ChEBI" id="CHEBI:190135"/>
    </ligand>
</feature>
<feature type="binding site" evidence="1">
    <location>
        <position position="226"/>
    </location>
    <ligand>
        <name>[2Fe-2S] cluster</name>
        <dbReference type="ChEBI" id="CHEBI:190135"/>
    </ligand>
</feature>
<feature type="binding site" evidence="1">
    <location>
        <position position="229"/>
    </location>
    <ligand>
        <name>[2Fe-2S] cluster</name>
        <dbReference type="ChEBI" id="CHEBI:190135"/>
    </ligand>
</feature>
<feature type="binding site" evidence="1">
    <location>
        <position position="246"/>
    </location>
    <ligand>
        <name>[2Fe-2S] cluster</name>
        <dbReference type="ChEBI" id="CHEBI:190135"/>
    </ligand>
</feature>
<gene>
    <name evidence="1" type="primary">pyrK</name>
    <name type="ordered locus">BCAH820_3899</name>
</gene>
<keyword id="KW-0001">2Fe-2S</keyword>
<keyword id="KW-0249">Electron transport</keyword>
<keyword id="KW-0274">FAD</keyword>
<keyword id="KW-0285">Flavoprotein</keyword>
<keyword id="KW-0408">Iron</keyword>
<keyword id="KW-0411">Iron-sulfur</keyword>
<keyword id="KW-0479">Metal-binding</keyword>
<keyword id="KW-0665">Pyrimidine biosynthesis</keyword>
<keyword id="KW-0813">Transport</keyword>
<accession>B7JJX2</accession>
<evidence type="ECO:0000255" key="1">
    <source>
        <dbReference type="HAMAP-Rule" id="MF_01211"/>
    </source>
</evidence>